<keyword id="KW-0227">DNA damage</keyword>
<keyword id="KW-0234">DNA repair</keyword>
<keyword id="KW-0238">DNA-binding</keyword>
<keyword id="KW-0326">Glycosidase</keyword>
<keyword id="KW-0378">Hydrolase</keyword>
<keyword id="KW-0456">Lyase</keyword>
<keyword id="KW-0479">Metal-binding</keyword>
<keyword id="KW-0511">Multifunctional enzyme</keyword>
<keyword id="KW-1185">Reference proteome</keyword>
<keyword id="KW-0862">Zinc</keyword>
<keyword id="KW-0863">Zinc-finger</keyword>
<protein>
    <recommendedName>
        <fullName>Formamidopyrimidine-DNA glycosylase</fullName>
        <shortName>Fapy-DNA glycosylase</shortName>
        <ecNumber>3.2.2.23</ecNumber>
    </recommendedName>
    <alternativeName>
        <fullName>DNA-(apurinic or apyrimidinic site) lyase MutM</fullName>
        <shortName>AP lyase MutM</shortName>
        <ecNumber>4.2.99.18</ecNumber>
    </alternativeName>
</protein>
<proteinExistence type="inferred from homology"/>
<dbReference type="EC" id="3.2.2.23"/>
<dbReference type="EC" id="4.2.99.18"/>
<dbReference type="EMBL" id="AL591688">
    <property type="protein sequence ID" value="CAC41802.1"/>
    <property type="molecule type" value="Genomic_DNA"/>
</dbReference>
<dbReference type="EMBL" id="L39265">
    <property type="protein sequence ID" value="AAA91094.1"/>
    <property type="molecule type" value="Genomic_DNA"/>
</dbReference>
<dbReference type="RefSeq" id="NP_384471.1">
    <property type="nucleotide sequence ID" value="NC_003047.1"/>
</dbReference>
<dbReference type="RefSeq" id="WP_010968531.1">
    <property type="nucleotide sequence ID" value="NC_003047.1"/>
</dbReference>
<dbReference type="SMR" id="Q59752"/>
<dbReference type="EnsemblBacteria" id="CAC41802">
    <property type="protein sequence ID" value="CAC41802"/>
    <property type="gene ID" value="SMc01154"/>
</dbReference>
<dbReference type="KEGG" id="sme:SMc01154"/>
<dbReference type="PATRIC" id="fig|266834.11.peg.1737"/>
<dbReference type="eggNOG" id="COG0266">
    <property type="taxonomic scope" value="Bacteria"/>
</dbReference>
<dbReference type="HOGENOM" id="CLU_038423_1_1_5"/>
<dbReference type="OrthoDB" id="9800855at2"/>
<dbReference type="Proteomes" id="UP000001976">
    <property type="component" value="Chromosome"/>
</dbReference>
<dbReference type="GO" id="GO:0034039">
    <property type="term" value="F:8-oxo-7,8-dihydroguanine DNA N-glycosylase activity"/>
    <property type="evidence" value="ECO:0007669"/>
    <property type="project" value="TreeGrafter"/>
</dbReference>
<dbReference type="GO" id="GO:0140078">
    <property type="term" value="F:class I DNA-(apurinic or apyrimidinic site) endonuclease activity"/>
    <property type="evidence" value="ECO:0007669"/>
    <property type="project" value="UniProtKB-EC"/>
</dbReference>
<dbReference type="GO" id="GO:0003684">
    <property type="term" value="F:damaged DNA binding"/>
    <property type="evidence" value="ECO:0007669"/>
    <property type="project" value="InterPro"/>
</dbReference>
<dbReference type="GO" id="GO:0008270">
    <property type="term" value="F:zinc ion binding"/>
    <property type="evidence" value="ECO:0007669"/>
    <property type="project" value="UniProtKB-UniRule"/>
</dbReference>
<dbReference type="GO" id="GO:0006284">
    <property type="term" value="P:base-excision repair"/>
    <property type="evidence" value="ECO:0007669"/>
    <property type="project" value="InterPro"/>
</dbReference>
<dbReference type="CDD" id="cd08966">
    <property type="entry name" value="EcFpg-like_N"/>
    <property type="match status" value="1"/>
</dbReference>
<dbReference type="FunFam" id="1.10.8.50:FF:000003">
    <property type="entry name" value="Formamidopyrimidine-DNA glycosylase"/>
    <property type="match status" value="1"/>
</dbReference>
<dbReference type="Gene3D" id="1.10.8.50">
    <property type="match status" value="1"/>
</dbReference>
<dbReference type="Gene3D" id="3.20.190.10">
    <property type="entry name" value="MutM-like, N-terminal"/>
    <property type="match status" value="1"/>
</dbReference>
<dbReference type="HAMAP" id="MF_00103">
    <property type="entry name" value="Fapy_DNA_glycosyl"/>
    <property type="match status" value="1"/>
</dbReference>
<dbReference type="InterPro" id="IPR015886">
    <property type="entry name" value="DNA_glyclase/AP_lyase_DNA-bd"/>
</dbReference>
<dbReference type="InterPro" id="IPR015887">
    <property type="entry name" value="DNA_glyclase_Znf_dom_DNA_BS"/>
</dbReference>
<dbReference type="InterPro" id="IPR020629">
    <property type="entry name" value="Formamido-pyr_DNA_Glyclase"/>
</dbReference>
<dbReference type="InterPro" id="IPR012319">
    <property type="entry name" value="FPG_cat"/>
</dbReference>
<dbReference type="InterPro" id="IPR035937">
    <property type="entry name" value="MutM-like_N-ter"/>
</dbReference>
<dbReference type="InterPro" id="IPR010979">
    <property type="entry name" value="Ribosomal_uS13-like_H2TH"/>
</dbReference>
<dbReference type="InterPro" id="IPR000214">
    <property type="entry name" value="Znf_DNA_glyclase/AP_lyase"/>
</dbReference>
<dbReference type="InterPro" id="IPR010663">
    <property type="entry name" value="Znf_FPG/IleRS"/>
</dbReference>
<dbReference type="NCBIfam" id="TIGR00577">
    <property type="entry name" value="fpg"/>
    <property type="match status" value="1"/>
</dbReference>
<dbReference type="NCBIfam" id="NF002211">
    <property type="entry name" value="PRK01103.1"/>
    <property type="match status" value="1"/>
</dbReference>
<dbReference type="PANTHER" id="PTHR22993">
    <property type="entry name" value="FORMAMIDOPYRIMIDINE-DNA GLYCOSYLASE"/>
    <property type="match status" value="1"/>
</dbReference>
<dbReference type="PANTHER" id="PTHR22993:SF9">
    <property type="entry name" value="FORMAMIDOPYRIMIDINE-DNA GLYCOSYLASE"/>
    <property type="match status" value="1"/>
</dbReference>
<dbReference type="Pfam" id="PF01149">
    <property type="entry name" value="Fapy_DNA_glyco"/>
    <property type="match status" value="1"/>
</dbReference>
<dbReference type="Pfam" id="PF06831">
    <property type="entry name" value="H2TH"/>
    <property type="match status" value="1"/>
</dbReference>
<dbReference type="Pfam" id="PF06827">
    <property type="entry name" value="zf-FPG_IleRS"/>
    <property type="match status" value="1"/>
</dbReference>
<dbReference type="SMART" id="SM00898">
    <property type="entry name" value="Fapy_DNA_glyco"/>
    <property type="match status" value="1"/>
</dbReference>
<dbReference type="SMART" id="SM01232">
    <property type="entry name" value="H2TH"/>
    <property type="match status" value="1"/>
</dbReference>
<dbReference type="SUPFAM" id="SSF57716">
    <property type="entry name" value="Glucocorticoid receptor-like (DNA-binding domain)"/>
    <property type="match status" value="1"/>
</dbReference>
<dbReference type="SUPFAM" id="SSF81624">
    <property type="entry name" value="N-terminal domain of MutM-like DNA repair proteins"/>
    <property type="match status" value="1"/>
</dbReference>
<dbReference type="SUPFAM" id="SSF46946">
    <property type="entry name" value="S13-like H2TH domain"/>
    <property type="match status" value="1"/>
</dbReference>
<dbReference type="PROSITE" id="PS51068">
    <property type="entry name" value="FPG_CAT"/>
    <property type="match status" value="1"/>
</dbReference>
<dbReference type="PROSITE" id="PS01242">
    <property type="entry name" value="ZF_FPG_1"/>
    <property type="match status" value="1"/>
</dbReference>
<dbReference type="PROSITE" id="PS51066">
    <property type="entry name" value="ZF_FPG_2"/>
    <property type="match status" value="1"/>
</dbReference>
<sequence length="301" mass="32696">MPELPEVETVKRGLAPTMEGALLVRAELRRPDLRFPFPENFANAVAGRRIIALSRRAKYLMIELEGGDVIIAHLGMSGSFRIEKGPIEAGADPATPGAFHHPRGKDEKHDHVVFHLDGGSGPARVIYNDPRRFGFMDLARRSALADHVFLRGLGEEPTGNALDAAYLATRFAGKIQPLKAALLDQRTIAGLGNIYVCEALWRSGLSPKRSAGTLVDKRGRPKQALIALTERIRAVIADAIAAGGSSLKDHIQADGSLGYFQHSFSVYDREGEACRTPGCHGTVARIVQAGRSTFYCPHCQK</sequence>
<comment type="function">
    <text evidence="1">Involved in base excision repair of DNA damaged by oxidation or by mutagenic agents. Acts as a DNA glycosylase that recognizes and removes damaged bases. Has a preference for oxidized purines, such as 7,8-dihydro-8-oxoguanine (8-oxoG). Has AP (apurinic/apyrimidinic) lyase activity and introduces nicks in the DNA strand. Cleaves the DNA backbone by beta-delta elimination to generate a single-strand break at the site of the removed base with both 3'- and 5'-phosphates (By similarity).</text>
</comment>
<comment type="catalytic activity">
    <reaction>
        <text>Hydrolysis of DNA containing ring-opened 7-methylguanine residues, releasing 2,6-diamino-4-hydroxy-5-(N-methyl)formamidopyrimidine.</text>
        <dbReference type="EC" id="3.2.2.23"/>
    </reaction>
</comment>
<comment type="catalytic activity">
    <reaction>
        <text>2'-deoxyribonucleotide-(2'-deoxyribose 5'-phosphate)-2'-deoxyribonucleotide-DNA = a 3'-end 2'-deoxyribonucleotide-(2,3-dehydro-2,3-deoxyribose 5'-phosphate)-DNA + a 5'-end 5'-phospho-2'-deoxyribonucleoside-DNA + H(+)</text>
        <dbReference type="Rhea" id="RHEA:66592"/>
        <dbReference type="Rhea" id="RHEA-COMP:13180"/>
        <dbReference type="Rhea" id="RHEA-COMP:16897"/>
        <dbReference type="Rhea" id="RHEA-COMP:17067"/>
        <dbReference type="ChEBI" id="CHEBI:15378"/>
        <dbReference type="ChEBI" id="CHEBI:136412"/>
        <dbReference type="ChEBI" id="CHEBI:157695"/>
        <dbReference type="ChEBI" id="CHEBI:167181"/>
        <dbReference type="EC" id="4.2.99.18"/>
    </reaction>
</comment>
<comment type="cofactor">
    <cofactor evidence="1">
        <name>Zn(2+)</name>
        <dbReference type="ChEBI" id="CHEBI:29105"/>
    </cofactor>
    <text evidence="1">Binds 1 zinc ion per subunit.</text>
</comment>
<comment type="subunit">
    <text evidence="1">Monomer.</text>
</comment>
<comment type="similarity">
    <text evidence="2">Belongs to the FPG family.</text>
</comment>
<gene>
    <name type="primary">mutM</name>
    <name type="synonym">fpg</name>
    <name type="ordered locus">R00365</name>
    <name type="ORF">SMc01154</name>
</gene>
<reference key="1">
    <citation type="journal article" date="2001" name="Proc. Natl. Acad. Sci. U.S.A.">
        <title>Analysis of the chromosome sequence of the legume symbiont Sinorhizobium meliloti strain 1021.</title>
        <authorList>
            <person name="Capela D."/>
            <person name="Barloy-Hubler F."/>
            <person name="Gouzy J."/>
            <person name="Bothe G."/>
            <person name="Ampe F."/>
            <person name="Batut J."/>
            <person name="Boistard P."/>
            <person name="Becker A."/>
            <person name="Boutry M."/>
            <person name="Cadieu E."/>
            <person name="Dreano S."/>
            <person name="Gloux S."/>
            <person name="Godrie T."/>
            <person name="Goffeau A."/>
            <person name="Kahn D."/>
            <person name="Kiss E."/>
            <person name="Lelaure V."/>
            <person name="Masuy D."/>
            <person name="Pohl T."/>
            <person name="Portetelle D."/>
            <person name="Puehler A."/>
            <person name="Purnelle B."/>
            <person name="Ramsperger U."/>
            <person name="Renard C."/>
            <person name="Thebault P."/>
            <person name="Vandenbol M."/>
            <person name="Weidner S."/>
            <person name="Galibert F."/>
        </authorList>
    </citation>
    <scope>NUCLEOTIDE SEQUENCE [LARGE SCALE GENOMIC DNA]</scope>
    <source>
        <strain>1021</strain>
    </source>
</reference>
<reference key="2">
    <citation type="journal article" date="2001" name="Science">
        <title>The composite genome of the legume symbiont Sinorhizobium meliloti.</title>
        <authorList>
            <person name="Galibert F."/>
            <person name="Finan T.M."/>
            <person name="Long S.R."/>
            <person name="Puehler A."/>
            <person name="Abola P."/>
            <person name="Ampe F."/>
            <person name="Barloy-Hubler F."/>
            <person name="Barnett M.J."/>
            <person name="Becker A."/>
            <person name="Boistard P."/>
            <person name="Bothe G."/>
            <person name="Boutry M."/>
            <person name="Bowser L."/>
            <person name="Buhrmester J."/>
            <person name="Cadieu E."/>
            <person name="Capela D."/>
            <person name="Chain P."/>
            <person name="Cowie A."/>
            <person name="Davis R.W."/>
            <person name="Dreano S."/>
            <person name="Federspiel N.A."/>
            <person name="Fisher R.F."/>
            <person name="Gloux S."/>
            <person name="Godrie T."/>
            <person name="Goffeau A."/>
            <person name="Golding B."/>
            <person name="Gouzy J."/>
            <person name="Gurjal M."/>
            <person name="Hernandez-Lucas I."/>
            <person name="Hong A."/>
            <person name="Huizar L."/>
            <person name="Hyman R.W."/>
            <person name="Jones T."/>
            <person name="Kahn D."/>
            <person name="Kahn M.L."/>
            <person name="Kalman S."/>
            <person name="Keating D.H."/>
            <person name="Kiss E."/>
            <person name="Komp C."/>
            <person name="Lelaure V."/>
            <person name="Masuy D."/>
            <person name="Palm C."/>
            <person name="Peck M.C."/>
            <person name="Pohl T.M."/>
            <person name="Portetelle D."/>
            <person name="Purnelle B."/>
            <person name="Ramsperger U."/>
            <person name="Surzycki R."/>
            <person name="Thebault P."/>
            <person name="Vandenbol M."/>
            <person name="Vorhoelter F.J."/>
            <person name="Weidner S."/>
            <person name="Wells D.H."/>
            <person name="Wong K."/>
            <person name="Yeh K.-C."/>
            <person name="Batut J."/>
        </authorList>
    </citation>
    <scope>NUCLEOTIDE SEQUENCE [LARGE SCALE GENOMIC DNA]</scope>
    <source>
        <strain>1021</strain>
    </source>
</reference>
<reference key="3">
    <citation type="journal article" date="1995" name="J. Bacteriol.">
        <title>The dnaA gene of Rhizobium meliloti lies within an unusual gene arrangement.</title>
        <authorList>
            <person name="Margolin W."/>
            <person name="Bramhill D."/>
            <person name="Long S.R."/>
        </authorList>
    </citation>
    <scope>NUCLEOTIDE SEQUENCE [GENOMIC DNA] OF 232-301</scope>
    <source>
        <strain>1021</strain>
    </source>
</reference>
<feature type="initiator methionine" description="Removed" evidence="1">
    <location>
        <position position="1"/>
    </location>
</feature>
<feature type="chain" id="PRO_0000170857" description="Formamidopyrimidine-DNA glycosylase">
    <location>
        <begin position="2"/>
        <end position="301"/>
    </location>
</feature>
<feature type="zinc finger region" description="FPG-type">
    <location>
        <begin position="265"/>
        <end position="301"/>
    </location>
</feature>
<feature type="active site" description="Schiff-base intermediate with DNA" evidence="1">
    <location>
        <position position="2"/>
    </location>
</feature>
<feature type="active site" description="Proton donor" evidence="1">
    <location>
        <position position="3"/>
    </location>
</feature>
<feature type="active site" description="Proton donor; for beta-elimination activity" evidence="1">
    <location>
        <position position="58"/>
    </location>
</feature>
<feature type="active site" description="Proton donor; for delta-elimination activity" evidence="1">
    <location>
        <position position="291"/>
    </location>
</feature>
<feature type="binding site" evidence="1">
    <location>
        <position position="109"/>
    </location>
    <ligand>
        <name>DNA</name>
        <dbReference type="ChEBI" id="CHEBI:16991"/>
    </ligand>
</feature>
<feature type="binding site" evidence="1">
    <location>
        <position position="131"/>
    </location>
    <ligand>
        <name>DNA</name>
        <dbReference type="ChEBI" id="CHEBI:16991"/>
    </ligand>
</feature>
<feature type="binding site" evidence="1">
    <location>
        <position position="174"/>
    </location>
    <ligand>
        <name>DNA</name>
        <dbReference type="ChEBI" id="CHEBI:16991"/>
    </ligand>
</feature>
<name>FPG_RHIME</name>
<accession>Q59752</accession>
<organism>
    <name type="scientific">Rhizobium meliloti (strain 1021)</name>
    <name type="common">Ensifer meliloti</name>
    <name type="synonym">Sinorhizobium meliloti</name>
    <dbReference type="NCBI Taxonomy" id="266834"/>
    <lineage>
        <taxon>Bacteria</taxon>
        <taxon>Pseudomonadati</taxon>
        <taxon>Pseudomonadota</taxon>
        <taxon>Alphaproteobacteria</taxon>
        <taxon>Hyphomicrobiales</taxon>
        <taxon>Rhizobiaceae</taxon>
        <taxon>Sinorhizobium/Ensifer group</taxon>
        <taxon>Sinorhizobium</taxon>
    </lineage>
</organism>
<evidence type="ECO:0000250" key="1"/>
<evidence type="ECO:0000305" key="2"/>